<gene>
    <name evidence="7" type="primary">ATG1</name>
    <name type="ORF">BBA_07025</name>
</gene>
<organism>
    <name type="scientific">Beauveria bassiana (strain ARSEF 2860)</name>
    <name type="common">White muscardine disease fungus</name>
    <name type="synonym">Tritirachium shiotae</name>
    <dbReference type="NCBI Taxonomy" id="655819"/>
    <lineage>
        <taxon>Eukaryota</taxon>
        <taxon>Fungi</taxon>
        <taxon>Dikarya</taxon>
        <taxon>Ascomycota</taxon>
        <taxon>Pezizomycotina</taxon>
        <taxon>Sordariomycetes</taxon>
        <taxon>Hypocreomycetidae</taxon>
        <taxon>Hypocreales</taxon>
        <taxon>Cordycipitaceae</taxon>
        <taxon>Beauveria</taxon>
    </lineage>
</organism>
<comment type="function">
    <text evidence="1 5">Serine/threonine protein kinase involved in the cytoplasm to vacuole transport (Cvt) and found to be essential in autophagy, where it is required for the formation of autophagosomes (PubMed:27197558). Involved in the clearance of protein aggregates which cannot be efficiently cleared by the proteasome (By similarity). Required for selective autophagic degradation of the nucleus (nucleophagy) as well as for mitophagy which contributes to regulate mitochondrial quantity and quality by eliminating the mitochondria to a basal level to fulfill cellular energy requirements and preventing excess ROS production (By similarity). Also involved in endoplasmic reticulum-specific autophagic process, in selective removal of ER-associated degradation (ERAD) substrates (By similarity). Plays a key role in ATG9 and ATG23 cycling through the pre-autophagosomal structure and is necessary to promote ATG18 binding to ATG9 through phosphorylation of ATG9. Catalyzes phosphorylation of ATG4, decreasing the interaction between ATG4 and ATG8 and impairing deconjugation of PE-conjugated forms of ATG8 (By similarity). Contributes to conidiation by regulating the conidial levels of the conidiation-related protein CP15 and mediates fungal oxidation resistance by controlling total superoxide dismutase (SOD) activity (PubMed:27197558).</text>
</comment>
<comment type="catalytic activity">
    <reaction evidence="1">
        <text>L-seryl-[protein] + ATP = O-phospho-L-seryl-[protein] + ADP + H(+)</text>
        <dbReference type="Rhea" id="RHEA:17989"/>
        <dbReference type="Rhea" id="RHEA-COMP:9863"/>
        <dbReference type="Rhea" id="RHEA-COMP:11604"/>
        <dbReference type="ChEBI" id="CHEBI:15378"/>
        <dbReference type="ChEBI" id="CHEBI:29999"/>
        <dbReference type="ChEBI" id="CHEBI:30616"/>
        <dbReference type="ChEBI" id="CHEBI:83421"/>
        <dbReference type="ChEBI" id="CHEBI:456216"/>
        <dbReference type="EC" id="2.7.11.1"/>
    </reaction>
</comment>
<comment type="catalytic activity">
    <reaction evidence="1">
        <text>L-threonyl-[protein] + ATP = O-phospho-L-threonyl-[protein] + ADP + H(+)</text>
        <dbReference type="Rhea" id="RHEA:46608"/>
        <dbReference type="Rhea" id="RHEA-COMP:11060"/>
        <dbReference type="Rhea" id="RHEA-COMP:11605"/>
        <dbReference type="ChEBI" id="CHEBI:15378"/>
        <dbReference type="ChEBI" id="CHEBI:30013"/>
        <dbReference type="ChEBI" id="CHEBI:30616"/>
        <dbReference type="ChEBI" id="CHEBI:61977"/>
        <dbReference type="ChEBI" id="CHEBI:456216"/>
        <dbReference type="EC" id="2.7.11.1"/>
    </reaction>
</comment>
<comment type="subunit">
    <text evidence="1">Homodimer (By similarity). Dimerization requires the presence of ATG13 (By similarity). Forms a ternary complex with ATG13 and ATG17 (By similarity).</text>
</comment>
<comment type="subcellular location">
    <subcellularLocation>
        <location evidence="1">Cytoplasm</location>
    </subcellularLocation>
    <subcellularLocation>
        <location evidence="1">Preautophagosomal structure membrane</location>
        <topology evidence="1">Peripheral membrane protein</topology>
    </subcellularLocation>
</comment>
<comment type="induction">
    <text evidence="6">Expression is reduced when the vacuolar protein VLP4 is absent (PubMed:28557308).</text>
</comment>
<comment type="domain">
    <text evidence="1">The LIR motif is required for the interaction with ATG8 and for the association of ATG1 with autophagosomes (By similarity).</text>
</comment>
<comment type="domain">
    <text evidence="2">The C-terminal region of ATG1 responsible for ATG13-binding comprises six alpha-helices which fold into two antiparallel three-helix bundles resembling each other (By similarity).</text>
</comment>
<comment type="disruption phenotype">
    <text evidence="5">Blocks autophagy (PubMed:27197558). Leads to reduced conidial germination under starvation (PubMed:27197558). Especially, leads to reduced CP15 levels in conidia (PubMed:27197558). Impairs growth of the mycelia on host cadavers and considerably weakens virulence (PubMed:27197558).</text>
</comment>
<comment type="similarity">
    <text evidence="8">Belongs to the protein kinase superfamily. Ser/Thr protein kinase family. APG1/unc-51/ULK1 subfamily.</text>
</comment>
<feature type="chain" id="PRO_0000443865" description="Serine/threonine-protein kinase ATG1">
    <location>
        <begin position="1"/>
        <end position="930"/>
    </location>
</feature>
<feature type="domain" description="Protein kinase" evidence="3">
    <location>
        <begin position="23"/>
        <end position="326"/>
    </location>
</feature>
<feature type="region of interest" description="Disordered" evidence="4">
    <location>
        <begin position="336"/>
        <end position="468"/>
    </location>
</feature>
<feature type="region of interest" description="Disordered" evidence="4">
    <location>
        <begin position="504"/>
        <end position="563"/>
    </location>
</feature>
<feature type="region of interest" description="ATG13-binding" evidence="2">
    <location>
        <begin position="629"/>
        <end position="897"/>
    </location>
</feature>
<feature type="region of interest" description="Disordered" evidence="4">
    <location>
        <begin position="853"/>
        <end position="874"/>
    </location>
</feature>
<feature type="region of interest" description="Disordered" evidence="4">
    <location>
        <begin position="904"/>
        <end position="930"/>
    </location>
</feature>
<feature type="compositionally biased region" description="Basic and acidic residues" evidence="4">
    <location>
        <begin position="337"/>
        <end position="350"/>
    </location>
</feature>
<feature type="compositionally biased region" description="Low complexity" evidence="4">
    <location>
        <begin position="377"/>
        <end position="393"/>
    </location>
</feature>
<feature type="compositionally biased region" description="Polar residues" evidence="4">
    <location>
        <begin position="400"/>
        <end position="417"/>
    </location>
</feature>
<feature type="compositionally biased region" description="Polar residues" evidence="4">
    <location>
        <begin position="504"/>
        <end position="531"/>
    </location>
</feature>
<feature type="active site" description="Proton acceptor" evidence="3">
    <location>
        <position position="166"/>
    </location>
</feature>
<feature type="binding site" evidence="3">
    <location>
        <begin position="29"/>
        <end position="37"/>
    </location>
    <ligand>
        <name>ATP</name>
        <dbReference type="ChEBI" id="CHEBI:30616"/>
    </ligand>
</feature>
<feature type="binding site" evidence="3">
    <location>
        <position position="52"/>
    </location>
    <ligand>
        <name>ATP</name>
        <dbReference type="ChEBI" id="CHEBI:30616"/>
    </ligand>
</feature>
<dbReference type="EC" id="2.7.11.1" evidence="1"/>
<dbReference type="EMBL" id="JH725171">
    <property type="protein sequence ID" value="EJP64020.1"/>
    <property type="molecule type" value="Genomic_DNA"/>
</dbReference>
<dbReference type="RefSeq" id="XP_008600344.1">
    <property type="nucleotide sequence ID" value="XM_008602122.1"/>
</dbReference>
<dbReference type="SMR" id="J4W0G2"/>
<dbReference type="FunCoup" id="J4W0G2">
    <property type="interactions" value="75"/>
</dbReference>
<dbReference type="STRING" id="655819.J4W0G2"/>
<dbReference type="GeneID" id="19890037"/>
<dbReference type="HOGENOM" id="CLU_006447_0_0_1"/>
<dbReference type="InParanoid" id="J4W0G2"/>
<dbReference type="OrthoDB" id="5367at474943"/>
<dbReference type="Proteomes" id="UP000002762">
    <property type="component" value="Unassembled WGS sequence"/>
</dbReference>
<dbReference type="GO" id="GO:1990316">
    <property type="term" value="C:Atg1/ULK1 kinase complex"/>
    <property type="evidence" value="ECO:0007669"/>
    <property type="project" value="EnsemblFungi"/>
</dbReference>
<dbReference type="GO" id="GO:0000421">
    <property type="term" value="C:autophagosome membrane"/>
    <property type="evidence" value="ECO:0007669"/>
    <property type="project" value="EnsemblFungi"/>
</dbReference>
<dbReference type="GO" id="GO:0005829">
    <property type="term" value="C:cytosol"/>
    <property type="evidence" value="ECO:0007669"/>
    <property type="project" value="EnsemblFungi"/>
</dbReference>
<dbReference type="GO" id="GO:0061908">
    <property type="term" value="C:phagophore"/>
    <property type="evidence" value="ECO:0007669"/>
    <property type="project" value="EnsemblFungi"/>
</dbReference>
<dbReference type="GO" id="GO:0034045">
    <property type="term" value="C:phagophore assembly site membrane"/>
    <property type="evidence" value="ECO:0007669"/>
    <property type="project" value="UniProtKB-SubCell"/>
</dbReference>
<dbReference type="GO" id="GO:0120095">
    <property type="term" value="C:vacuole-isolation membrane contact site"/>
    <property type="evidence" value="ECO:0007669"/>
    <property type="project" value="EnsemblFungi"/>
</dbReference>
<dbReference type="GO" id="GO:0005524">
    <property type="term" value="F:ATP binding"/>
    <property type="evidence" value="ECO:0007669"/>
    <property type="project" value="UniProtKB-KW"/>
</dbReference>
<dbReference type="GO" id="GO:0106310">
    <property type="term" value="F:protein serine kinase activity"/>
    <property type="evidence" value="ECO:0007669"/>
    <property type="project" value="RHEA"/>
</dbReference>
<dbReference type="GO" id="GO:0004674">
    <property type="term" value="F:protein serine/threonine kinase activity"/>
    <property type="evidence" value="ECO:0007669"/>
    <property type="project" value="UniProtKB-KW"/>
</dbReference>
<dbReference type="GO" id="GO:0000422">
    <property type="term" value="P:autophagy of mitochondrion"/>
    <property type="evidence" value="ECO:0007669"/>
    <property type="project" value="EnsemblFungi"/>
</dbReference>
<dbReference type="GO" id="GO:0006995">
    <property type="term" value="P:cellular response to nitrogen starvation"/>
    <property type="evidence" value="ECO:0007669"/>
    <property type="project" value="EnsemblFungi"/>
</dbReference>
<dbReference type="GO" id="GO:0051365">
    <property type="term" value="P:cellular response to potassium ion starvation"/>
    <property type="evidence" value="ECO:0007669"/>
    <property type="project" value="EnsemblFungi"/>
</dbReference>
<dbReference type="GO" id="GO:0034727">
    <property type="term" value="P:piecemeal microautophagy of the nucleus"/>
    <property type="evidence" value="ECO:0007669"/>
    <property type="project" value="EnsemblFungi"/>
</dbReference>
<dbReference type="GO" id="GO:0034497">
    <property type="term" value="P:protein localization to phagophore assembly site"/>
    <property type="evidence" value="ECO:0007669"/>
    <property type="project" value="EnsemblFungi"/>
</dbReference>
<dbReference type="GO" id="GO:0015031">
    <property type="term" value="P:protein transport"/>
    <property type="evidence" value="ECO:0007669"/>
    <property type="project" value="UniProtKB-KW"/>
</dbReference>
<dbReference type="GO" id="GO:0010506">
    <property type="term" value="P:regulation of autophagy"/>
    <property type="evidence" value="ECO:0007669"/>
    <property type="project" value="InterPro"/>
</dbReference>
<dbReference type="GO" id="GO:0061709">
    <property type="term" value="P:reticulophagy"/>
    <property type="evidence" value="ECO:0007669"/>
    <property type="project" value="EnsemblFungi"/>
</dbReference>
<dbReference type="CDD" id="cd14009">
    <property type="entry name" value="STKc_ATG1_ULK_like"/>
    <property type="match status" value="1"/>
</dbReference>
<dbReference type="FunFam" id="3.30.200.20:FF:000042">
    <property type="entry name" value="Aurora kinase A"/>
    <property type="match status" value="1"/>
</dbReference>
<dbReference type="FunFam" id="1.10.510.10:FF:000817">
    <property type="entry name" value="Serine/threonine-protein kinase ATG1"/>
    <property type="match status" value="1"/>
</dbReference>
<dbReference type="Gene3D" id="1.10.510.10">
    <property type="entry name" value="Transferase(Phosphotransferase) domain 1"/>
    <property type="match status" value="1"/>
</dbReference>
<dbReference type="InterPro" id="IPR045269">
    <property type="entry name" value="Atg1-like"/>
</dbReference>
<dbReference type="InterPro" id="IPR048941">
    <property type="entry name" value="ATG1-like_MIT2"/>
</dbReference>
<dbReference type="InterPro" id="IPR022708">
    <property type="entry name" value="Atg1-like_tMIT"/>
</dbReference>
<dbReference type="InterPro" id="IPR011009">
    <property type="entry name" value="Kinase-like_dom_sf"/>
</dbReference>
<dbReference type="InterPro" id="IPR000719">
    <property type="entry name" value="Prot_kinase_dom"/>
</dbReference>
<dbReference type="InterPro" id="IPR017441">
    <property type="entry name" value="Protein_kinase_ATP_BS"/>
</dbReference>
<dbReference type="InterPro" id="IPR008271">
    <property type="entry name" value="Ser/Thr_kinase_AS"/>
</dbReference>
<dbReference type="PANTHER" id="PTHR24348:SF22">
    <property type="entry name" value="NON-SPECIFIC SERINE_THREONINE PROTEIN KINASE"/>
    <property type="match status" value="1"/>
</dbReference>
<dbReference type="PANTHER" id="PTHR24348">
    <property type="entry name" value="SERINE/THREONINE-PROTEIN KINASE UNC-51-RELATED"/>
    <property type="match status" value="1"/>
</dbReference>
<dbReference type="Pfam" id="PF12063">
    <property type="entry name" value="ATG1-like_MIT1"/>
    <property type="match status" value="1"/>
</dbReference>
<dbReference type="Pfam" id="PF21127">
    <property type="entry name" value="ATG1-like_MIT2"/>
    <property type="match status" value="1"/>
</dbReference>
<dbReference type="Pfam" id="PF00069">
    <property type="entry name" value="Pkinase"/>
    <property type="match status" value="1"/>
</dbReference>
<dbReference type="SMART" id="SM00220">
    <property type="entry name" value="S_TKc"/>
    <property type="match status" value="1"/>
</dbReference>
<dbReference type="SUPFAM" id="SSF56112">
    <property type="entry name" value="Protein kinase-like (PK-like)"/>
    <property type="match status" value="1"/>
</dbReference>
<dbReference type="PROSITE" id="PS00107">
    <property type="entry name" value="PROTEIN_KINASE_ATP"/>
    <property type="match status" value="1"/>
</dbReference>
<dbReference type="PROSITE" id="PS50011">
    <property type="entry name" value="PROTEIN_KINASE_DOM"/>
    <property type="match status" value="1"/>
</dbReference>
<dbReference type="PROSITE" id="PS00108">
    <property type="entry name" value="PROTEIN_KINASE_ST"/>
    <property type="match status" value="1"/>
</dbReference>
<proteinExistence type="evidence at transcript level"/>
<sequence length="930" mass="102313">MTSRQEGASSHGSRRSSRHVGSFIIDREIGKGSFAQVYMGWHKESKAAVAIKSVELERLNKKLKENLYGEIQILKTLRHPHIVALHDCVESSTHINLIMEYCELGDLSLFIKKRDKLITHPATHDMARKYPSAPNSGLHEVVIRHFLKQLSSALEFLRAKNYVHRDVKPQNLLLLPSQAFREERALPIMEASQDSLIPISGLASLPMLKLADFGFARVLPSTSLADTLCGSPLYMAPEILRYERYDAKADLWSVGTVLYEMITGRPPFRARNHVELLRKIEAAEDVIKFPREVSVTPDLKALVRSLLKRSPVERLSFENFFAHHVVTGDILGLVEDDIPKPPKRELETIRQGEALPSSPRVQMARQLSSDPRDTRSSPKSPRSSPRSSTVNSSADAAPRRQSQNAERRLSISSHNSGQGLGIQRPAPPIQSHTAPNHPRAADRSGREPQPSSLRVARQPSDVSLTEEEKAAQDVMFERDYVVVERRHVEVNALADELAANEKLGQNNSSAKSSPLQRRYTQQGSATSTTGAIPTPASRTALVAQGRAGQDRRSSYEKALSASPGSASSAISKAIQDASLRLFGYKVNTMRQKGSSPPLYQPFPAYPTPTSAGLLSDGKGSQVSDEDAKAAQAIEEFATRSDCVYGFAEVKYKQLLPMAPSMDYGLGGVSPDKGTSEEDGLTVDATVALSEEALVLYVKSLTLLARAMDIASLWWSKKTRAESSVVSQTLVQRINAVVQWVRQRFNEVLEKSEVVRLKLTEAQKLLPEDHPSNPAHQGEDSIASSAVGAKQVYLTPGISAEKLMYDRALEMSRAAAIDEVTNENLPGCEISYLTAIRMLEAVLDSDDEATARNISSGKEIAKDATQEGSDLDTEEAAHVRKMITMITGRLNMVRKKQQMIAEANNQAKHVSAMRRLSGDVTPRSVPSYGST</sequence>
<evidence type="ECO:0000250" key="1">
    <source>
        <dbReference type="UniProtKB" id="P53104"/>
    </source>
</evidence>
<evidence type="ECO:0000250" key="2">
    <source>
        <dbReference type="UniProtKB" id="W0T9X4"/>
    </source>
</evidence>
<evidence type="ECO:0000255" key="3">
    <source>
        <dbReference type="PROSITE-ProRule" id="PRU00159"/>
    </source>
</evidence>
<evidence type="ECO:0000256" key="4">
    <source>
        <dbReference type="SAM" id="MobiDB-lite"/>
    </source>
</evidence>
<evidence type="ECO:0000269" key="5">
    <source>
    </source>
</evidence>
<evidence type="ECO:0000269" key="6">
    <source>
    </source>
</evidence>
<evidence type="ECO:0000303" key="7">
    <source>
    </source>
</evidence>
<evidence type="ECO:0000305" key="8"/>
<reference key="1">
    <citation type="journal article" date="2012" name="Sci. Rep.">
        <title>Genomic perspectives on the evolution of fungal entomopathogenicity in Beauveria bassiana.</title>
        <authorList>
            <person name="Xiao G."/>
            <person name="Ying S.-H."/>
            <person name="Zheng P."/>
            <person name="Wang Z.-L."/>
            <person name="Zhang S."/>
            <person name="Xie X.-Q."/>
            <person name="Shang Y."/>
            <person name="St Leger R.J."/>
            <person name="Zhao G.-P."/>
            <person name="Wang C."/>
            <person name="Feng M.-G."/>
        </authorList>
    </citation>
    <scope>NUCLEOTIDE SEQUENCE [LARGE SCALE GENOMIC DNA]</scope>
    <source>
        <strain>ARSEF 2860</strain>
    </source>
</reference>
<reference key="2">
    <citation type="journal article" date="2016" name="Sci. Rep.">
        <title>The autophagy-related genes BbATG1 and BbATG8 have different functions in differentiation, stress resistance and virulence of mycopathogen Beauveria bassiana.</title>
        <authorList>
            <person name="Ying S.H."/>
            <person name="Liu J."/>
            <person name="Chu X.L."/>
            <person name="Xie X.Q."/>
            <person name="Feng M.G."/>
        </authorList>
    </citation>
    <scope>FUNCTION</scope>
    <scope>DISRUPTION PHENOTYPE</scope>
</reference>
<reference key="3">
    <citation type="journal article" date="2017" name="Environ. Microbiol.">
        <title>Discovery of a new intravacuolar protein required for the autophagy, development and virulence of Beauveria bassiana.</title>
        <authorList>
            <person name="Chu Z.J."/>
            <person name="Sun H.H."/>
            <person name="Zhu X.G."/>
            <person name="Ying S.H."/>
            <person name="Feng M.G."/>
        </authorList>
    </citation>
    <scope>INDUCTION</scope>
</reference>
<accession>J4W0G2</accession>
<protein>
    <recommendedName>
        <fullName evidence="8">Serine/threonine-protein kinase ATG1</fullName>
        <ecNumber evidence="1">2.7.11.1</ecNumber>
    </recommendedName>
    <alternativeName>
        <fullName evidence="7">Autophagy-related protein 1</fullName>
    </alternativeName>
</protein>
<name>ATG1_BEAB2</name>
<keyword id="KW-0067">ATP-binding</keyword>
<keyword id="KW-0072">Autophagy</keyword>
<keyword id="KW-0963">Cytoplasm</keyword>
<keyword id="KW-0418">Kinase</keyword>
<keyword id="KW-0472">Membrane</keyword>
<keyword id="KW-0547">Nucleotide-binding</keyword>
<keyword id="KW-0653">Protein transport</keyword>
<keyword id="KW-1185">Reference proteome</keyword>
<keyword id="KW-0723">Serine/threonine-protein kinase</keyword>
<keyword id="KW-0808">Transferase</keyword>
<keyword id="KW-0813">Transport</keyword>